<reference key="1">
    <citation type="journal article" date="2006" name="Genome Res.">
        <title>Massive genome erosion and functional adaptations provide insights into the symbiotic lifestyle of Sodalis glossinidius in the tsetse host.</title>
        <authorList>
            <person name="Toh H."/>
            <person name="Weiss B.L."/>
            <person name="Perkin S.A.H."/>
            <person name="Yamashita A."/>
            <person name="Oshima K."/>
            <person name="Hattori M."/>
            <person name="Aksoy S."/>
        </authorList>
    </citation>
    <scope>NUCLEOTIDE SEQUENCE [LARGE SCALE GENOMIC DNA]</scope>
    <source>
        <strain>morsitans</strain>
    </source>
</reference>
<protein>
    <recommendedName>
        <fullName evidence="1">Succinyl-diaminopimelate desuccinylase</fullName>
        <shortName evidence="1">SDAP desuccinylase</shortName>
        <ecNumber evidence="1">3.5.1.18</ecNumber>
    </recommendedName>
    <alternativeName>
        <fullName evidence="1">N-succinyl-LL-2,6-diaminoheptanedioate amidohydrolase</fullName>
    </alternativeName>
</protein>
<organism>
    <name type="scientific">Sodalis glossinidius (strain morsitans)</name>
    <dbReference type="NCBI Taxonomy" id="343509"/>
    <lineage>
        <taxon>Bacteria</taxon>
        <taxon>Pseudomonadati</taxon>
        <taxon>Pseudomonadota</taxon>
        <taxon>Gammaproteobacteria</taxon>
        <taxon>Enterobacterales</taxon>
        <taxon>Bruguierivoracaceae</taxon>
        <taxon>Sodalis</taxon>
    </lineage>
</organism>
<proteinExistence type="inferred from homology"/>
<accession>Q2NS82</accession>
<keyword id="KW-0028">Amino-acid biosynthesis</keyword>
<keyword id="KW-0170">Cobalt</keyword>
<keyword id="KW-0220">Diaminopimelate biosynthesis</keyword>
<keyword id="KW-0378">Hydrolase</keyword>
<keyword id="KW-0457">Lysine biosynthesis</keyword>
<keyword id="KW-0479">Metal-binding</keyword>
<keyword id="KW-0862">Zinc</keyword>
<evidence type="ECO:0000255" key="1">
    <source>
        <dbReference type="HAMAP-Rule" id="MF_01690"/>
    </source>
</evidence>
<sequence length="375" mass="41124">MPCPVLELTQQLIKRPSLSPDDAGCQALIAARLQALGFTIEQMSFGDTLNFWAWRGQGSTLAFAGHTDVVPAGDLQLWDNPPFEPTLCDGMLYGRGAADMKGSLAAMVVAAERFVAQHPQHEGRLAFLITSDEEADAQDGTVKVVDALMARQERLDYCLVGEPSSSRQVGDIVKNGRRGSLTANLVVQGVQGHVAYPHLADNPFHRAMAALKELVETQWDEGNSFFPPTTMQIANIHAGTGSNNVIPGELLVQFNFRFSTELTDVIIRQRVEALLQHHGLRYRIDWSLSGQPFLTARGELVDAAVRAVEHYQELTPRLETTGGTSDGRFIARLGAQVVELGPVNATIHKVNECVSAADLQLLSRMYQRIMEQLIL</sequence>
<gene>
    <name evidence="1" type="primary">dapE</name>
    <name type="ordered locus">SG1718</name>
</gene>
<feature type="chain" id="PRO_0000375754" description="Succinyl-diaminopimelate desuccinylase">
    <location>
        <begin position="1"/>
        <end position="375"/>
    </location>
</feature>
<feature type="active site" evidence="1">
    <location>
        <position position="68"/>
    </location>
</feature>
<feature type="active site" description="Proton acceptor" evidence="1">
    <location>
        <position position="133"/>
    </location>
</feature>
<feature type="binding site" evidence="1">
    <location>
        <position position="66"/>
    </location>
    <ligand>
        <name>Zn(2+)</name>
        <dbReference type="ChEBI" id="CHEBI:29105"/>
        <label>1</label>
    </ligand>
</feature>
<feature type="binding site" evidence="1">
    <location>
        <position position="99"/>
    </location>
    <ligand>
        <name>Zn(2+)</name>
        <dbReference type="ChEBI" id="CHEBI:29105"/>
        <label>1</label>
    </ligand>
</feature>
<feature type="binding site" evidence="1">
    <location>
        <position position="99"/>
    </location>
    <ligand>
        <name>Zn(2+)</name>
        <dbReference type="ChEBI" id="CHEBI:29105"/>
        <label>2</label>
    </ligand>
</feature>
<feature type="binding site" evidence="1">
    <location>
        <position position="134"/>
    </location>
    <ligand>
        <name>Zn(2+)</name>
        <dbReference type="ChEBI" id="CHEBI:29105"/>
        <label>2</label>
    </ligand>
</feature>
<feature type="binding site" evidence="1">
    <location>
        <position position="162"/>
    </location>
    <ligand>
        <name>Zn(2+)</name>
        <dbReference type="ChEBI" id="CHEBI:29105"/>
        <label>1</label>
    </ligand>
</feature>
<feature type="binding site" evidence="1">
    <location>
        <position position="348"/>
    </location>
    <ligand>
        <name>Zn(2+)</name>
        <dbReference type="ChEBI" id="CHEBI:29105"/>
        <label>2</label>
    </ligand>
</feature>
<name>DAPE_SODGM</name>
<comment type="function">
    <text evidence="1">Catalyzes the hydrolysis of N-succinyl-L,L-diaminopimelic acid (SDAP), forming succinate and LL-2,6-diaminopimelate (DAP), an intermediate involved in the bacterial biosynthesis of lysine and meso-diaminopimelic acid, an essential component of bacterial cell walls.</text>
</comment>
<comment type="catalytic activity">
    <reaction evidence="1">
        <text>N-succinyl-(2S,6S)-2,6-diaminopimelate + H2O = (2S,6S)-2,6-diaminopimelate + succinate</text>
        <dbReference type="Rhea" id="RHEA:22608"/>
        <dbReference type="ChEBI" id="CHEBI:15377"/>
        <dbReference type="ChEBI" id="CHEBI:30031"/>
        <dbReference type="ChEBI" id="CHEBI:57609"/>
        <dbReference type="ChEBI" id="CHEBI:58087"/>
        <dbReference type="EC" id="3.5.1.18"/>
    </reaction>
</comment>
<comment type="cofactor">
    <cofactor evidence="1">
        <name>Zn(2+)</name>
        <dbReference type="ChEBI" id="CHEBI:29105"/>
    </cofactor>
    <cofactor evidence="1">
        <name>Co(2+)</name>
        <dbReference type="ChEBI" id="CHEBI:48828"/>
    </cofactor>
    <text evidence="1">Binds 2 Zn(2+) or Co(2+) ions per subunit.</text>
</comment>
<comment type="pathway">
    <text evidence="1">Amino-acid biosynthesis; L-lysine biosynthesis via DAP pathway; LL-2,6-diaminopimelate from (S)-tetrahydrodipicolinate (succinylase route): step 3/3.</text>
</comment>
<comment type="subunit">
    <text evidence="1">Homodimer.</text>
</comment>
<comment type="similarity">
    <text evidence="1">Belongs to the peptidase M20A family. DapE subfamily.</text>
</comment>
<dbReference type="EC" id="3.5.1.18" evidence="1"/>
<dbReference type="EMBL" id="AP008232">
    <property type="protein sequence ID" value="BAE74993.1"/>
    <property type="molecule type" value="Genomic_DNA"/>
</dbReference>
<dbReference type="RefSeq" id="WP_011411542.1">
    <property type="nucleotide sequence ID" value="NC_007712.1"/>
</dbReference>
<dbReference type="SMR" id="Q2NS82"/>
<dbReference type="STRING" id="343509.SG1718"/>
<dbReference type="MEROPS" id="M20.010"/>
<dbReference type="KEGG" id="sgl:SG1718"/>
<dbReference type="eggNOG" id="COG0624">
    <property type="taxonomic scope" value="Bacteria"/>
</dbReference>
<dbReference type="HOGENOM" id="CLU_021802_4_0_6"/>
<dbReference type="OrthoDB" id="9809784at2"/>
<dbReference type="BioCyc" id="SGLO343509:SGP1_RS15610-MONOMER"/>
<dbReference type="UniPathway" id="UPA00034">
    <property type="reaction ID" value="UER00021"/>
</dbReference>
<dbReference type="Proteomes" id="UP000001932">
    <property type="component" value="Chromosome"/>
</dbReference>
<dbReference type="GO" id="GO:0008777">
    <property type="term" value="F:acetylornithine deacetylase activity"/>
    <property type="evidence" value="ECO:0007669"/>
    <property type="project" value="TreeGrafter"/>
</dbReference>
<dbReference type="GO" id="GO:0050897">
    <property type="term" value="F:cobalt ion binding"/>
    <property type="evidence" value="ECO:0007669"/>
    <property type="project" value="UniProtKB-UniRule"/>
</dbReference>
<dbReference type="GO" id="GO:0009014">
    <property type="term" value="F:succinyl-diaminopimelate desuccinylase activity"/>
    <property type="evidence" value="ECO:0007669"/>
    <property type="project" value="UniProtKB-UniRule"/>
</dbReference>
<dbReference type="GO" id="GO:0008270">
    <property type="term" value="F:zinc ion binding"/>
    <property type="evidence" value="ECO:0007669"/>
    <property type="project" value="UniProtKB-UniRule"/>
</dbReference>
<dbReference type="GO" id="GO:0019877">
    <property type="term" value="P:diaminopimelate biosynthetic process"/>
    <property type="evidence" value="ECO:0007669"/>
    <property type="project" value="UniProtKB-UniRule"/>
</dbReference>
<dbReference type="GO" id="GO:0006526">
    <property type="term" value="P:L-arginine biosynthetic process"/>
    <property type="evidence" value="ECO:0007669"/>
    <property type="project" value="TreeGrafter"/>
</dbReference>
<dbReference type="GO" id="GO:0009089">
    <property type="term" value="P:lysine biosynthetic process via diaminopimelate"/>
    <property type="evidence" value="ECO:0007669"/>
    <property type="project" value="UniProtKB-UniRule"/>
</dbReference>
<dbReference type="CDD" id="cd03891">
    <property type="entry name" value="M20_DapE_proteobac"/>
    <property type="match status" value="1"/>
</dbReference>
<dbReference type="FunFam" id="3.30.70.360:FF:000011">
    <property type="entry name" value="Succinyl-diaminopimelate desuccinylase"/>
    <property type="match status" value="1"/>
</dbReference>
<dbReference type="FunFam" id="3.40.630.10:FF:000005">
    <property type="entry name" value="Succinyl-diaminopimelate desuccinylase"/>
    <property type="match status" value="1"/>
</dbReference>
<dbReference type="FunFam" id="3.40.630.10:FF:000010">
    <property type="entry name" value="Succinyl-diaminopimelate desuccinylase"/>
    <property type="match status" value="1"/>
</dbReference>
<dbReference type="Gene3D" id="3.40.630.10">
    <property type="entry name" value="Zn peptidases"/>
    <property type="match status" value="2"/>
</dbReference>
<dbReference type="HAMAP" id="MF_01690">
    <property type="entry name" value="DapE"/>
    <property type="match status" value="1"/>
</dbReference>
<dbReference type="InterPro" id="IPR001261">
    <property type="entry name" value="ArgE/DapE_CS"/>
</dbReference>
<dbReference type="InterPro" id="IPR036264">
    <property type="entry name" value="Bact_exopeptidase_dim_dom"/>
</dbReference>
<dbReference type="InterPro" id="IPR005941">
    <property type="entry name" value="DapE_proteobac"/>
</dbReference>
<dbReference type="InterPro" id="IPR002933">
    <property type="entry name" value="Peptidase_M20"/>
</dbReference>
<dbReference type="InterPro" id="IPR011650">
    <property type="entry name" value="Peptidase_M20_dimer"/>
</dbReference>
<dbReference type="InterPro" id="IPR050072">
    <property type="entry name" value="Peptidase_M20A"/>
</dbReference>
<dbReference type="NCBIfam" id="TIGR01246">
    <property type="entry name" value="dapE_proteo"/>
    <property type="match status" value="1"/>
</dbReference>
<dbReference type="NCBIfam" id="NF009557">
    <property type="entry name" value="PRK13009.1"/>
    <property type="match status" value="1"/>
</dbReference>
<dbReference type="PANTHER" id="PTHR43808">
    <property type="entry name" value="ACETYLORNITHINE DEACETYLASE"/>
    <property type="match status" value="1"/>
</dbReference>
<dbReference type="PANTHER" id="PTHR43808:SF31">
    <property type="entry name" value="N-ACETYL-L-CITRULLINE DEACETYLASE"/>
    <property type="match status" value="1"/>
</dbReference>
<dbReference type="Pfam" id="PF07687">
    <property type="entry name" value="M20_dimer"/>
    <property type="match status" value="1"/>
</dbReference>
<dbReference type="Pfam" id="PF01546">
    <property type="entry name" value="Peptidase_M20"/>
    <property type="match status" value="1"/>
</dbReference>
<dbReference type="SUPFAM" id="SSF55031">
    <property type="entry name" value="Bacterial exopeptidase dimerisation domain"/>
    <property type="match status" value="1"/>
</dbReference>
<dbReference type="SUPFAM" id="SSF53187">
    <property type="entry name" value="Zn-dependent exopeptidases"/>
    <property type="match status" value="1"/>
</dbReference>
<dbReference type="PROSITE" id="PS00758">
    <property type="entry name" value="ARGE_DAPE_CPG2_1"/>
    <property type="match status" value="1"/>
</dbReference>